<accession>Q8VIG3</accession>
<accession>Q9DAL5</accession>
<feature type="chain" id="PRO_0000065663" description="Radial spoke head 1 homolog">
    <location>
        <begin position="1"/>
        <end position="301"/>
    </location>
</feature>
<feature type="repeat" description="MORN 1">
    <location>
        <begin position="20"/>
        <end position="43"/>
    </location>
</feature>
<feature type="repeat" description="MORN 2">
    <location>
        <begin position="44"/>
        <end position="66"/>
    </location>
</feature>
<feature type="repeat" description="MORN 3">
    <location>
        <begin position="67"/>
        <end position="89"/>
    </location>
</feature>
<feature type="repeat" description="MORN 4">
    <location>
        <begin position="90"/>
        <end position="112"/>
    </location>
</feature>
<feature type="repeat" description="MORN 5">
    <location>
        <begin position="113"/>
        <end position="135"/>
    </location>
</feature>
<feature type="repeat" description="MORN 6">
    <location>
        <begin position="159"/>
        <end position="181"/>
    </location>
</feature>
<feature type="region of interest" description="Disordered" evidence="1">
    <location>
        <begin position="1"/>
        <end position="41"/>
    </location>
</feature>
<feature type="region of interest" description="Disordered" evidence="1">
    <location>
        <begin position="225"/>
        <end position="301"/>
    </location>
</feature>
<feature type="compositionally biased region" description="Acidic residues" evidence="1">
    <location>
        <begin position="1"/>
        <end position="20"/>
    </location>
</feature>
<feature type="compositionally biased region" description="Basic and acidic residues" evidence="1">
    <location>
        <begin position="21"/>
        <end position="31"/>
    </location>
</feature>
<feature type="compositionally biased region" description="Acidic residues" evidence="1">
    <location>
        <begin position="249"/>
        <end position="261"/>
    </location>
</feature>
<feature type="compositionally biased region" description="Basic and acidic residues" evidence="1">
    <location>
        <begin position="262"/>
        <end position="278"/>
    </location>
</feature>
<feature type="compositionally biased region" description="Polar residues" evidence="1">
    <location>
        <begin position="279"/>
        <end position="290"/>
    </location>
</feature>
<feature type="compositionally biased region" description="Acidic residues" evidence="1">
    <location>
        <begin position="292"/>
        <end position="301"/>
    </location>
</feature>
<feature type="sequence conflict" description="In Ref. 1; BAB83693." evidence="7" ref="1">
    <original>P</original>
    <variation>S</variation>
    <location>
        <position position="39"/>
    </location>
</feature>
<feature type="strand" evidence="9">
    <location>
        <begin position="26"/>
        <end position="29"/>
    </location>
</feature>
<feature type="strand" evidence="9">
    <location>
        <begin position="31"/>
        <end position="37"/>
    </location>
</feature>
<feature type="strand" evidence="9">
    <location>
        <begin position="43"/>
        <end position="49"/>
    </location>
</feature>
<feature type="strand" evidence="9">
    <location>
        <begin position="52"/>
        <end position="60"/>
    </location>
</feature>
<feature type="strand" evidence="9">
    <location>
        <begin position="62"/>
        <end position="64"/>
    </location>
</feature>
<feature type="strand" evidence="9">
    <location>
        <begin position="66"/>
        <end position="72"/>
    </location>
</feature>
<feature type="strand" evidence="9">
    <location>
        <begin position="75"/>
        <end position="83"/>
    </location>
</feature>
<feature type="strand" evidence="9">
    <location>
        <begin position="89"/>
        <end position="95"/>
    </location>
</feature>
<feature type="strand" evidence="9">
    <location>
        <begin position="98"/>
        <end position="106"/>
    </location>
</feature>
<feature type="strand" evidence="9">
    <location>
        <begin position="112"/>
        <end position="117"/>
    </location>
</feature>
<feature type="strand" evidence="9">
    <location>
        <begin position="119"/>
        <end position="122"/>
    </location>
</feature>
<feature type="strand" evidence="9">
    <location>
        <begin position="124"/>
        <end position="129"/>
    </location>
</feature>
<feature type="strand" evidence="9">
    <location>
        <begin position="131"/>
        <end position="133"/>
    </location>
</feature>
<feature type="strand" evidence="9">
    <location>
        <begin position="136"/>
        <end position="142"/>
    </location>
</feature>
<feature type="strand" evidence="9">
    <location>
        <begin position="148"/>
        <end position="153"/>
    </location>
</feature>
<feature type="strand" evidence="9">
    <location>
        <begin position="155"/>
        <end position="161"/>
    </location>
</feature>
<feature type="strand" evidence="9">
    <location>
        <begin position="165"/>
        <end position="167"/>
    </location>
</feature>
<feature type="strand" evidence="9">
    <location>
        <begin position="172"/>
        <end position="176"/>
    </location>
</feature>
<feature type="strand" evidence="9">
    <location>
        <begin position="179"/>
        <end position="184"/>
    </location>
</feature>
<feature type="strand" evidence="9">
    <location>
        <begin position="188"/>
        <end position="192"/>
    </location>
</feature>
<feature type="strand" evidence="9">
    <location>
        <begin position="196"/>
        <end position="200"/>
    </location>
</feature>
<keyword id="KW-0002">3D-structure</keyword>
<keyword id="KW-0025">Alternative splicing</keyword>
<keyword id="KW-0966">Cell projection</keyword>
<keyword id="KW-0158">Chromosome</keyword>
<keyword id="KW-0969">Cilium</keyword>
<keyword id="KW-0963">Cytoplasm</keyword>
<keyword id="KW-0206">Cytoskeleton</keyword>
<keyword id="KW-0282">Flagellum</keyword>
<keyword id="KW-0469">Meiosis</keyword>
<keyword id="KW-1185">Reference proteome</keyword>
<keyword id="KW-0677">Repeat</keyword>
<comment type="function">
    <text evidence="4 5 6">Functions as part of axonemal radial spoke complexes that play an important part in the motility of sperm and cilia.</text>
</comment>
<comment type="subunit">
    <text evidence="2 4 5">Component of the axonemal radial spoke 1 (RS1) and 2 (RS2) complexes, at least composed of spoke head proteins RSPH1, RSPH3, RSPH9 and the cilia-specific component RSPH4A or sperm-specific component RSPH6A, spoke stalk proteins RSPH14, DNAJB13, DYDC1, ROPN1L and NME5, and the RS1 complex-specific anchor protein IQUB (PubMed:34871179, PubMed:36417862). Interacts with RSPH3B (PubMed:34871179). Interacts with RSPH4A (PubMed:34871179). Interacts with RSPH6A (PubMed:30185526, PubMed:34871179).</text>
</comment>
<comment type="subcellular location">
    <subcellularLocation>
        <location evidence="6">Cytoplasm</location>
    </subcellularLocation>
    <subcellularLocation>
        <location evidence="6">Chromosome</location>
    </subcellularLocation>
    <subcellularLocation>
        <location evidence="3 4">Cytoplasm</location>
        <location evidence="3 4">Cytoskeleton</location>
        <location evidence="3 4">Cilium axoneme</location>
    </subcellularLocation>
    <subcellularLocation>
        <location evidence="5">Cytoplasm</location>
        <location evidence="5">Cytoskeleton</location>
        <location evidence="5">Flagellum axoneme</location>
    </subcellularLocation>
    <text evidence="6">Cytoplasmic in late spermatocytes, secondary spermatocytes and round spermatids. Gathered around metaphase chromosomes during meiotic divisions.</text>
</comment>
<comment type="alternative products">
    <event type="alternative splicing"/>
    <isoform>
        <id>Q8VIG3-1</id>
        <name>1</name>
        <sequence type="displayed"/>
    </isoform>
    <isoform>
        <id>Q8VIG3-2</id>
        <name>2</name>
        <sequence type="not described"/>
    </isoform>
</comment>
<comment type="tissue specificity">
    <text evidence="3 4 6">Expressed in the trachea, ependymal cells, oviduct and ependymal cells (at protein level) (PubMed:32203505, PubMed:34871179). Germ cell specific. Specifically expressed in testis, and to a lower extent in ovary. Not expressed in somatic tissues (PubMed:9578619).</text>
</comment>
<comment type="developmental stage">
    <text evidence="6">During male germ cell development it is not detected until 12 days. Significant expression is detected from 14-day-old through to adult testis. Expression is first detected in the pachytene spermatocytes at stage V, becomes stronger from the late pachytene spermatocytes to round spermatid stage, and then gradually decreases as the morphogenesis proceeds further. Not expressed in germ cells located in the first layer of the seminiferous epithelium (spermatogonia, leptotene and zygotene spermatocytes).</text>
</comment>
<comment type="sequence caution" evidence="7">
    <conflict type="frameshift">
        <sequence resource="EMBL-CDS" id="BAB83693"/>
    </conflict>
</comment>
<protein>
    <recommendedName>
        <fullName>Radial spoke head 1 homolog</fullName>
    </recommendedName>
    <alternativeName>
        <fullName>Male meiotic metaphase chromosome-associated acidic protein</fullName>
    </alternativeName>
    <alternativeName>
        <fullName>Meichroacidin</fullName>
    </alternativeName>
    <alternativeName>
        <fullName>Testis-specific gene A2 protein</fullName>
    </alternativeName>
</protein>
<name>RSPH1_MOUSE</name>
<organism>
    <name type="scientific">Mus musculus</name>
    <name type="common">Mouse</name>
    <dbReference type="NCBI Taxonomy" id="10090"/>
    <lineage>
        <taxon>Eukaryota</taxon>
        <taxon>Metazoa</taxon>
        <taxon>Chordata</taxon>
        <taxon>Craniata</taxon>
        <taxon>Vertebrata</taxon>
        <taxon>Euteleostomi</taxon>
        <taxon>Mammalia</taxon>
        <taxon>Eutheria</taxon>
        <taxon>Euarchontoglires</taxon>
        <taxon>Glires</taxon>
        <taxon>Rodentia</taxon>
        <taxon>Myomorpha</taxon>
        <taxon>Muroidea</taxon>
        <taxon>Muridae</taxon>
        <taxon>Murinae</taxon>
        <taxon>Mus</taxon>
        <taxon>Mus</taxon>
    </lineage>
</organism>
<proteinExistence type="evidence at protein level"/>
<sequence length="301" mass="34181">MSDLGSEELEEEGENDLGEYEGERNEVGERHGHGKARLPNGDTYEGSYEFGKRHGQGTYKFKNGARYTGDYVKNKKHGQGTFIYPDGSRYEGEWADDQRHGQGVYYYVNNDTYTGEWFNHQRHGQGTYLYAETGSKYVGTWVHGQQEGAAELIHLNHRYQGKFMNKNPVGPGKYVFDIGCEQHGEYRLTDTERGEEEEEEETLVNIVPKWKALNITELALWTPTLSEEQPPPEGQGQEEPQGLTGVGDPSEDIQAEGFEGELEPRGADEDVDTFRQESQENSYDIDQGNLNFDEEPSDLQD</sequence>
<evidence type="ECO:0000256" key="1">
    <source>
        <dbReference type="SAM" id="MobiDB-lite"/>
    </source>
</evidence>
<evidence type="ECO:0000269" key="2">
    <source>
    </source>
</evidence>
<evidence type="ECO:0000269" key="3">
    <source>
    </source>
</evidence>
<evidence type="ECO:0000269" key="4">
    <source>
    </source>
</evidence>
<evidence type="ECO:0000269" key="5">
    <source>
    </source>
</evidence>
<evidence type="ECO:0000269" key="6">
    <source>
    </source>
</evidence>
<evidence type="ECO:0000305" key="7"/>
<evidence type="ECO:0007744" key="8">
    <source>
        <dbReference type="PDB" id="7DMP"/>
    </source>
</evidence>
<evidence type="ECO:0007829" key="9">
    <source>
        <dbReference type="PDB" id="7DMP"/>
    </source>
</evidence>
<gene>
    <name type="primary">Rsph1</name>
    <name type="synonym">Tsga2</name>
</gene>
<dbReference type="EMBL" id="AB006535">
    <property type="protein sequence ID" value="BAB83693.1"/>
    <property type="status" value="ALT_FRAME"/>
    <property type="molecule type" value="mRNA"/>
</dbReference>
<dbReference type="EMBL" id="AK005739">
    <property type="protein sequence ID" value="BAB24214.1"/>
    <property type="molecule type" value="mRNA"/>
</dbReference>
<dbReference type="EMBL" id="BC049584">
    <property type="protein sequence ID" value="AAH49584.1"/>
    <property type="molecule type" value="mRNA"/>
</dbReference>
<dbReference type="CCDS" id="CCDS28604.1">
    <molecule id="Q8VIG3-1"/>
</dbReference>
<dbReference type="RefSeq" id="NP_079566.1">
    <molecule id="Q8VIG3-1"/>
    <property type="nucleotide sequence ID" value="NM_025290.4"/>
</dbReference>
<dbReference type="PDB" id="7DMP">
    <property type="method" value="EM"/>
    <property type="resolution" value="3.20 A"/>
    <property type="chains" value="A/a=1-301"/>
</dbReference>
<dbReference type="PDB" id="8WZB">
    <property type="method" value="EM"/>
    <property type="resolution" value="3.28 A"/>
    <property type="chains" value="F/I=1-301"/>
</dbReference>
<dbReference type="PDB" id="8X2U">
    <property type="method" value="EM"/>
    <property type="resolution" value="3.57 A"/>
    <property type="chains" value="F/I/N/Q=1-301"/>
</dbReference>
<dbReference type="PDBsum" id="7DMP"/>
<dbReference type="PDBsum" id="8WZB"/>
<dbReference type="PDBsum" id="8X2U"/>
<dbReference type="EMDB" id="EMD-30766"/>
<dbReference type="EMDB" id="EMD-37949"/>
<dbReference type="EMDB" id="EMD-38020"/>
<dbReference type="SMR" id="Q8VIG3"/>
<dbReference type="BioGRID" id="204343">
    <property type="interactions" value="1"/>
</dbReference>
<dbReference type="ComplexPortal" id="CPX-8161">
    <property type="entry name" value="Radial spoke complex, ciliiar variant"/>
</dbReference>
<dbReference type="ComplexPortal" id="CPX-8162">
    <property type="entry name" value="Radial spoke complex, flagellar variant"/>
</dbReference>
<dbReference type="CORUM" id="Q8VIG3"/>
<dbReference type="FunCoup" id="Q8VIG3">
    <property type="interactions" value="202"/>
</dbReference>
<dbReference type="STRING" id="10090.ENSMUSP00000024832"/>
<dbReference type="iPTMnet" id="Q8VIG3"/>
<dbReference type="PhosphoSitePlus" id="Q8VIG3"/>
<dbReference type="REPRODUCTION-2DPAGE" id="Q8VIG3"/>
<dbReference type="PaxDb" id="10090-ENSMUSP00000024832"/>
<dbReference type="ProteomicsDB" id="256938">
    <molecule id="Q8VIG3-1"/>
</dbReference>
<dbReference type="Antibodypedia" id="9520">
    <property type="antibodies" value="67 antibodies from 24 providers"/>
</dbReference>
<dbReference type="DNASU" id="22092"/>
<dbReference type="Ensembl" id="ENSMUST00000024832.9">
    <molecule id="Q8VIG3-1"/>
    <property type="protein sequence ID" value="ENSMUSP00000024832.8"/>
    <property type="gene ID" value="ENSMUSG00000024033.11"/>
</dbReference>
<dbReference type="GeneID" id="22092"/>
<dbReference type="KEGG" id="mmu:22092"/>
<dbReference type="UCSC" id="uc008buu.1">
    <molecule id="Q8VIG3-1"/>
    <property type="organism name" value="mouse"/>
</dbReference>
<dbReference type="AGR" id="MGI:1194909"/>
<dbReference type="CTD" id="89765"/>
<dbReference type="MGI" id="MGI:1194909">
    <property type="gene designation" value="Rsph1"/>
</dbReference>
<dbReference type="VEuPathDB" id="HostDB:ENSMUSG00000024033"/>
<dbReference type="eggNOG" id="KOG0231">
    <property type="taxonomic scope" value="Eukaryota"/>
</dbReference>
<dbReference type="GeneTree" id="ENSGT00940000157240"/>
<dbReference type="HOGENOM" id="CLU_032017_2_0_1"/>
<dbReference type="InParanoid" id="Q8VIG3"/>
<dbReference type="OMA" id="IYEGAWF"/>
<dbReference type="OrthoDB" id="423343at2759"/>
<dbReference type="PhylomeDB" id="Q8VIG3"/>
<dbReference type="TreeFam" id="TF329346"/>
<dbReference type="BioGRID-ORCS" id="22092">
    <property type="hits" value="3 hits in 78 CRISPR screens"/>
</dbReference>
<dbReference type="ChiTaRS" id="Rsph1">
    <property type="organism name" value="mouse"/>
</dbReference>
<dbReference type="PRO" id="PR:Q8VIG3"/>
<dbReference type="Proteomes" id="UP000000589">
    <property type="component" value="Chromosome 17"/>
</dbReference>
<dbReference type="RNAct" id="Q8VIG3">
    <property type="molecule type" value="protein"/>
</dbReference>
<dbReference type="Bgee" id="ENSMUSG00000024033">
    <property type="expression patterns" value="Expressed in seminiferous tubule of testis and 152 other cell types or tissues"/>
</dbReference>
<dbReference type="ExpressionAtlas" id="Q8VIG3">
    <property type="expression patterns" value="baseline and differential"/>
</dbReference>
<dbReference type="GO" id="GO:0097729">
    <property type="term" value="C:9+2 motile cilium"/>
    <property type="evidence" value="ECO:0000314"/>
    <property type="project" value="UniProtKB"/>
</dbReference>
<dbReference type="GO" id="GO:0005930">
    <property type="term" value="C:axoneme"/>
    <property type="evidence" value="ECO:0000314"/>
    <property type="project" value="MGI"/>
</dbReference>
<dbReference type="GO" id="GO:0000794">
    <property type="term" value="C:condensed nuclear chromosome"/>
    <property type="evidence" value="ECO:0000314"/>
    <property type="project" value="MGI"/>
</dbReference>
<dbReference type="GO" id="GO:0005737">
    <property type="term" value="C:cytoplasm"/>
    <property type="evidence" value="ECO:0000314"/>
    <property type="project" value="MGI"/>
</dbReference>
<dbReference type="GO" id="GO:0005576">
    <property type="term" value="C:extracellular region"/>
    <property type="evidence" value="ECO:0007669"/>
    <property type="project" value="GOC"/>
</dbReference>
<dbReference type="GO" id="GO:0072687">
    <property type="term" value="C:meiotic spindle"/>
    <property type="evidence" value="ECO:0000314"/>
    <property type="project" value="MGI"/>
</dbReference>
<dbReference type="GO" id="GO:0031514">
    <property type="term" value="C:motile cilium"/>
    <property type="evidence" value="ECO:0000250"/>
    <property type="project" value="UniProtKB"/>
</dbReference>
<dbReference type="GO" id="GO:0001520">
    <property type="term" value="C:outer dense fiber"/>
    <property type="evidence" value="ECO:0000314"/>
    <property type="project" value="MGI"/>
</dbReference>
<dbReference type="GO" id="GO:0001534">
    <property type="term" value="C:radial spoke"/>
    <property type="evidence" value="ECO:0000314"/>
    <property type="project" value="UniProtKB"/>
</dbReference>
<dbReference type="GO" id="GO:0001535">
    <property type="term" value="C:radial spoke head"/>
    <property type="evidence" value="ECO:0000314"/>
    <property type="project" value="UniProtKB"/>
</dbReference>
<dbReference type="GO" id="GO:0120336">
    <property type="term" value="C:radial spoke head 1"/>
    <property type="evidence" value="ECO:0000314"/>
    <property type="project" value="MGI"/>
</dbReference>
<dbReference type="GO" id="GO:0120338">
    <property type="term" value="C:radial spoke head 3"/>
    <property type="evidence" value="ECO:0000314"/>
    <property type="project" value="MGI"/>
</dbReference>
<dbReference type="GO" id="GO:0036126">
    <property type="term" value="C:sperm flagellum"/>
    <property type="evidence" value="ECO:0000314"/>
    <property type="project" value="UniProtKB"/>
</dbReference>
<dbReference type="GO" id="GO:0035082">
    <property type="term" value="P:axoneme assembly"/>
    <property type="evidence" value="ECO:0000250"/>
    <property type="project" value="UniProtKB"/>
</dbReference>
<dbReference type="GO" id="GO:0003351">
    <property type="term" value="P:epithelial cilium movement involved in extracellular fluid movement"/>
    <property type="evidence" value="ECO:0000305"/>
    <property type="project" value="UniProtKB"/>
</dbReference>
<dbReference type="GO" id="GO:0030317">
    <property type="term" value="P:flagellated sperm motility"/>
    <property type="evidence" value="ECO:0000305"/>
    <property type="project" value="UniProtKB"/>
</dbReference>
<dbReference type="GO" id="GO:0007618">
    <property type="term" value="P:mating"/>
    <property type="evidence" value="ECO:0000305"/>
    <property type="project" value="UniProtKB"/>
</dbReference>
<dbReference type="GO" id="GO:0051321">
    <property type="term" value="P:meiotic cell cycle"/>
    <property type="evidence" value="ECO:0007669"/>
    <property type="project" value="UniProtKB-KW"/>
</dbReference>
<dbReference type="GO" id="GO:0007286">
    <property type="term" value="P:spermatid development"/>
    <property type="evidence" value="ECO:0000315"/>
    <property type="project" value="MGI"/>
</dbReference>
<dbReference type="FunFam" id="2.20.110.10:FF:000010">
    <property type="entry name" value="Radial spoke head 1 homolog"/>
    <property type="match status" value="1"/>
</dbReference>
<dbReference type="Gene3D" id="2.20.110.10">
    <property type="entry name" value="Histone H3 K4-specific methyltransferase SET7/9 N-terminal domain"/>
    <property type="match status" value="2"/>
</dbReference>
<dbReference type="InterPro" id="IPR003409">
    <property type="entry name" value="MORN"/>
</dbReference>
<dbReference type="PANTHER" id="PTHR43215">
    <property type="entry name" value="RADIAL SPOKE HEAD 1 HOMOLOG"/>
    <property type="match status" value="1"/>
</dbReference>
<dbReference type="PANTHER" id="PTHR43215:SF14">
    <property type="entry name" value="RADIAL SPOKE HEAD 1 HOMOLOG"/>
    <property type="match status" value="1"/>
</dbReference>
<dbReference type="Pfam" id="PF02493">
    <property type="entry name" value="MORN"/>
    <property type="match status" value="7"/>
</dbReference>
<dbReference type="SMART" id="SM00698">
    <property type="entry name" value="MORN"/>
    <property type="match status" value="6"/>
</dbReference>
<dbReference type="SUPFAM" id="SSF82185">
    <property type="entry name" value="Histone H3 K4-specific methyltransferase SET7/9 N-terminal domain"/>
    <property type="match status" value="2"/>
</dbReference>
<reference key="1">
    <citation type="journal article" date="1998" name="Dev. Biol.">
        <title>Molecular cloning and characterization of meichroacidin (male meiotic metaphase chromosome-associated acidic protein).</title>
        <authorList>
            <person name="Tsuchida J."/>
            <person name="Nishina Y."/>
            <person name="Wakabayashi N."/>
            <person name="Nozaki M."/>
            <person name="Sakai Y."/>
            <person name="Nishimune Y."/>
        </authorList>
    </citation>
    <scope>NUCLEOTIDE SEQUENCE [MRNA]</scope>
    <scope>FUNCTION</scope>
    <scope>SUBCELLULAR LOCATION</scope>
    <scope>TISSUE SPECIFICITY</scope>
    <scope>DEVELOPMENTAL STAGE</scope>
    <source>
        <tissue>Testis</tissue>
    </source>
</reference>
<reference key="2">
    <citation type="journal article" date="2005" name="Science">
        <title>The transcriptional landscape of the mammalian genome.</title>
        <authorList>
            <person name="Carninci P."/>
            <person name="Kasukawa T."/>
            <person name="Katayama S."/>
            <person name="Gough J."/>
            <person name="Frith M.C."/>
            <person name="Maeda N."/>
            <person name="Oyama R."/>
            <person name="Ravasi T."/>
            <person name="Lenhard B."/>
            <person name="Wells C."/>
            <person name="Kodzius R."/>
            <person name="Shimokawa K."/>
            <person name="Bajic V.B."/>
            <person name="Brenner S.E."/>
            <person name="Batalov S."/>
            <person name="Forrest A.R."/>
            <person name="Zavolan M."/>
            <person name="Davis M.J."/>
            <person name="Wilming L.G."/>
            <person name="Aidinis V."/>
            <person name="Allen J.E."/>
            <person name="Ambesi-Impiombato A."/>
            <person name="Apweiler R."/>
            <person name="Aturaliya R.N."/>
            <person name="Bailey T.L."/>
            <person name="Bansal M."/>
            <person name="Baxter L."/>
            <person name="Beisel K.W."/>
            <person name="Bersano T."/>
            <person name="Bono H."/>
            <person name="Chalk A.M."/>
            <person name="Chiu K.P."/>
            <person name="Choudhary V."/>
            <person name="Christoffels A."/>
            <person name="Clutterbuck D.R."/>
            <person name="Crowe M.L."/>
            <person name="Dalla E."/>
            <person name="Dalrymple B.P."/>
            <person name="de Bono B."/>
            <person name="Della Gatta G."/>
            <person name="di Bernardo D."/>
            <person name="Down T."/>
            <person name="Engstrom P."/>
            <person name="Fagiolini M."/>
            <person name="Faulkner G."/>
            <person name="Fletcher C.F."/>
            <person name="Fukushima T."/>
            <person name="Furuno M."/>
            <person name="Futaki S."/>
            <person name="Gariboldi M."/>
            <person name="Georgii-Hemming P."/>
            <person name="Gingeras T.R."/>
            <person name="Gojobori T."/>
            <person name="Green R.E."/>
            <person name="Gustincich S."/>
            <person name="Harbers M."/>
            <person name="Hayashi Y."/>
            <person name="Hensch T.K."/>
            <person name="Hirokawa N."/>
            <person name="Hill D."/>
            <person name="Huminiecki L."/>
            <person name="Iacono M."/>
            <person name="Ikeo K."/>
            <person name="Iwama A."/>
            <person name="Ishikawa T."/>
            <person name="Jakt M."/>
            <person name="Kanapin A."/>
            <person name="Katoh M."/>
            <person name="Kawasawa Y."/>
            <person name="Kelso J."/>
            <person name="Kitamura H."/>
            <person name="Kitano H."/>
            <person name="Kollias G."/>
            <person name="Krishnan S.P."/>
            <person name="Kruger A."/>
            <person name="Kummerfeld S.K."/>
            <person name="Kurochkin I.V."/>
            <person name="Lareau L.F."/>
            <person name="Lazarevic D."/>
            <person name="Lipovich L."/>
            <person name="Liu J."/>
            <person name="Liuni S."/>
            <person name="McWilliam S."/>
            <person name="Madan Babu M."/>
            <person name="Madera M."/>
            <person name="Marchionni L."/>
            <person name="Matsuda H."/>
            <person name="Matsuzawa S."/>
            <person name="Miki H."/>
            <person name="Mignone F."/>
            <person name="Miyake S."/>
            <person name="Morris K."/>
            <person name="Mottagui-Tabar S."/>
            <person name="Mulder N."/>
            <person name="Nakano N."/>
            <person name="Nakauchi H."/>
            <person name="Ng P."/>
            <person name="Nilsson R."/>
            <person name="Nishiguchi S."/>
            <person name="Nishikawa S."/>
            <person name="Nori F."/>
            <person name="Ohara O."/>
            <person name="Okazaki Y."/>
            <person name="Orlando V."/>
            <person name="Pang K.C."/>
            <person name="Pavan W.J."/>
            <person name="Pavesi G."/>
            <person name="Pesole G."/>
            <person name="Petrovsky N."/>
            <person name="Piazza S."/>
            <person name="Reed J."/>
            <person name="Reid J.F."/>
            <person name="Ring B.Z."/>
            <person name="Ringwald M."/>
            <person name="Rost B."/>
            <person name="Ruan Y."/>
            <person name="Salzberg S.L."/>
            <person name="Sandelin A."/>
            <person name="Schneider C."/>
            <person name="Schoenbach C."/>
            <person name="Sekiguchi K."/>
            <person name="Semple C.A."/>
            <person name="Seno S."/>
            <person name="Sessa L."/>
            <person name="Sheng Y."/>
            <person name="Shibata Y."/>
            <person name="Shimada H."/>
            <person name="Shimada K."/>
            <person name="Silva D."/>
            <person name="Sinclair B."/>
            <person name="Sperling S."/>
            <person name="Stupka E."/>
            <person name="Sugiura K."/>
            <person name="Sultana R."/>
            <person name="Takenaka Y."/>
            <person name="Taki K."/>
            <person name="Tammoja K."/>
            <person name="Tan S.L."/>
            <person name="Tang S."/>
            <person name="Taylor M.S."/>
            <person name="Tegner J."/>
            <person name="Teichmann S.A."/>
            <person name="Ueda H.R."/>
            <person name="van Nimwegen E."/>
            <person name="Verardo R."/>
            <person name="Wei C.L."/>
            <person name="Yagi K."/>
            <person name="Yamanishi H."/>
            <person name="Zabarovsky E."/>
            <person name="Zhu S."/>
            <person name="Zimmer A."/>
            <person name="Hide W."/>
            <person name="Bult C."/>
            <person name="Grimmond S.M."/>
            <person name="Teasdale R.D."/>
            <person name="Liu E.T."/>
            <person name="Brusic V."/>
            <person name="Quackenbush J."/>
            <person name="Wahlestedt C."/>
            <person name="Mattick J.S."/>
            <person name="Hume D.A."/>
            <person name="Kai C."/>
            <person name="Sasaki D."/>
            <person name="Tomaru Y."/>
            <person name="Fukuda S."/>
            <person name="Kanamori-Katayama M."/>
            <person name="Suzuki M."/>
            <person name="Aoki J."/>
            <person name="Arakawa T."/>
            <person name="Iida J."/>
            <person name="Imamura K."/>
            <person name="Itoh M."/>
            <person name="Kato T."/>
            <person name="Kawaji H."/>
            <person name="Kawagashira N."/>
            <person name="Kawashima T."/>
            <person name="Kojima M."/>
            <person name="Kondo S."/>
            <person name="Konno H."/>
            <person name="Nakano K."/>
            <person name="Ninomiya N."/>
            <person name="Nishio T."/>
            <person name="Okada M."/>
            <person name="Plessy C."/>
            <person name="Shibata K."/>
            <person name="Shiraki T."/>
            <person name="Suzuki S."/>
            <person name="Tagami M."/>
            <person name="Waki K."/>
            <person name="Watahiki A."/>
            <person name="Okamura-Oho Y."/>
            <person name="Suzuki H."/>
            <person name="Kawai J."/>
            <person name="Hayashizaki Y."/>
        </authorList>
    </citation>
    <scope>NUCLEOTIDE SEQUENCE [LARGE SCALE MRNA]</scope>
    <source>
        <strain>C57BL/6J</strain>
        <tissue>Testis</tissue>
    </source>
</reference>
<reference key="3">
    <citation type="journal article" date="2004" name="Genome Res.">
        <title>The status, quality, and expansion of the NIH full-length cDNA project: the Mammalian Gene Collection (MGC).</title>
        <authorList>
            <consortium name="The MGC Project Team"/>
        </authorList>
    </citation>
    <scope>NUCLEOTIDE SEQUENCE [LARGE SCALE MRNA]</scope>
    <source>
        <tissue>Testis</tissue>
    </source>
</reference>
<reference key="4">
    <citation type="journal article" date="2010" name="Cell">
        <title>A tissue-specific atlas of mouse protein phosphorylation and expression.</title>
        <authorList>
            <person name="Huttlin E.L."/>
            <person name="Jedrychowski M.P."/>
            <person name="Elias J.E."/>
            <person name="Goswami T."/>
            <person name="Rad R."/>
            <person name="Beausoleil S.A."/>
            <person name="Villen J."/>
            <person name="Haas W."/>
            <person name="Sowa M.E."/>
            <person name="Gygi S.P."/>
        </authorList>
    </citation>
    <scope>IDENTIFICATION BY MASS SPECTROMETRY [LARGE SCALE ANALYSIS]</scope>
    <source>
        <tissue>Testis</tissue>
    </source>
</reference>
<reference key="5">
    <citation type="journal article" date="2018" name="J. Cell Sci.">
        <title>RSPH6A is required for sperm flagellum formation and male fertility in mice.</title>
        <authorList>
            <person name="Abbasi F."/>
            <person name="Miyata H."/>
            <person name="Shimada K."/>
            <person name="Morohoshi A."/>
            <person name="Nozawa K."/>
            <person name="Matsumura T."/>
            <person name="Xu Z."/>
            <person name="Pratiwi P."/>
            <person name="Ikawa M."/>
        </authorList>
    </citation>
    <scope>INTERACTION WITH RSPH6A</scope>
</reference>
<reference key="6">
    <citation type="journal article" date="2020" name="PLoS Genet.">
        <title>Rsph4a is essential for the triplet radial spoke head assembly of the mouse motile cilia.</title>
        <authorList>
            <person name="Yoke H."/>
            <person name="Ueno H."/>
            <person name="Narita A."/>
            <person name="Sakai T."/>
            <person name="Horiuchi K."/>
            <person name="Shingyoji C."/>
            <person name="Hamada H."/>
            <person name="Shinohara K."/>
        </authorList>
    </citation>
    <scope>SUBCELLULAR LOCATION</scope>
    <scope>TISSUE SPECIFICITY</scope>
</reference>
<reference key="7">
    <citation type="journal article" date="2022" name="Cell Rep.">
        <title>Differential requirements of IQUB for the assembly of radial spoke 1 and the motility of mouse cilia and flagella.</title>
        <authorList>
            <person name="Zhang X."/>
            <person name="Xiao Z."/>
            <person name="Zhang J."/>
            <person name="Xu C."/>
            <person name="Liu S."/>
            <person name="Cheng L."/>
            <person name="Zhou S."/>
            <person name="Zhao S."/>
            <person name="Zhang Y."/>
            <person name="Wu J."/>
            <person name="Wang Y."/>
            <person name="Liu M."/>
        </authorList>
    </citation>
    <scope>FUNCTION</scope>
    <scope>IDENTIFICATION IN RADIAL SPOKE COMPLEX 1</scope>
    <scope>IDENTIFICATION BY MASS SPECTROMETRY</scope>
    <scope>SUBCELLULAR LOCATION</scope>
</reference>
<reference evidence="8" key="8">
    <citation type="journal article" date="2021" name="Proc. Natl. Acad. Sci. U.S.A.">
        <title>Distinct architecture and composition of mouse axonemal radial spoke head revealed by cryo-EM.</title>
        <authorList>
            <person name="Zheng W."/>
            <person name="Li F."/>
            <person name="Ding Z."/>
            <person name="Liu H."/>
            <person name="Zhu L."/>
            <person name="Xu C."/>
            <person name="Li J."/>
            <person name="Gao Q."/>
            <person name="Wang Y."/>
            <person name="Fu Z."/>
            <person name="Peng C."/>
            <person name="Yan X."/>
            <person name="Zhu X."/>
            <person name="Cong Y."/>
        </authorList>
    </citation>
    <scope>STRUCTURE BY ELECTRON MICROSCOPY (3.20 ANGSTROMS)</scope>
    <scope>FUNCTION</scope>
    <scope>IDENTIFICATION IN RADIAL SPOKE COMPLEX 1 AND RADIAL SPOKE COMPLEX 2</scope>
    <scope>INTERACTION WITH RSPH3B; RSPH4A AND RSPH6A</scope>
    <scope>IDENTIFICATION BY MASS SPECTROMETRY</scope>
    <scope>SUBCELLULAR LOCATION</scope>
    <scope>TISSUE SPECIFICITY</scope>
</reference>